<organism>
    <name type="scientific">Methanocaldococcus jannaschii (strain ATCC 43067 / DSM 2661 / JAL-1 / JCM 10045 / NBRC 100440)</name>
    <name type="common">Methanococcus jannaschii</name>
    <dbReference type="NCBI Taxonomy" id="243232"/>
    <lineage>
        <taxon>Archaea</taxon>
        <taxon>Methanobacteriati</taxon>
        <taxon>Methanobacteriota</taxon>
        <taxon>Methanomada group</taxon>
        <taxon>Methanococci</taxon>
        <taxon>Methanococcales</taxon>
        <taxon>Methanocaldococcaceae</taxon>
        <taxon>Methanocaldococcus</taxon>
    </lineage>
</organism>
<name>TOP6A_METJA</name>
<evidence type="ECO:0000255" key="1">
    <source>
        <dbReference type="HAMAP-Rule" id="MF_00132"/>
    </source>
</evidence>
<evidence type="ECO:0000255" key="2">
    <source>
        <dbReference type="PROSITE-ProRule" id="PRU01385"/>
    </source>
</evidence>
<evidence type="ECO:0000269" key="3">
    <source>
    </source>
</evidence>
<evidence type="ECO:0007829" key="4">
    <source>
        <dbReference type="PDB" id="1D3Y"/>
    </source>
</evidence>
<keyword id="KW-0002">3D-structure</keyword>
<keyword id="KW-0067">ATP-binding</keyword>
<keyword id="KW-0903">Direct protein sequencing</keyword>
<keyword id="KW-0238">DNA-binding</keyword>
<keyword id="KW-0413">Isomerase</keyword>
<keyword id="KW-0460">Magnesium</keyword>
<keyword id="KW-0479">Metal-binding</keyword>
<keyword id="KW-0547">Nucleotide-binding</keyword>
<keyword id="KW-1185">Reference proteome</keyword>
<keyword id="KW-0799">Topoisomerase</keyword>
<accession>Q57815</accession>
<dbReference type="EC" id="5.6.2.2" evidence="1 3"/>
<dbReference type="EMBL" id="L77117">
    <property type="protein sequence ID" value="AAB98358.1"/>
    <property type="molecule type" value="Genomic_DNA"/>
</dbReference>
<dbReference type="PIR" id="A64346">
    <property type="entry name" value="A64346"/>
</dbReference>
<dbReference type="RefSeq" id="WP_010869868.1">
    <property type="nucleotide sequence ID" value="NC_000909.1"/>
</dbReference>
<dbReference type="PDB" id="1D3Y">
    <property type="method" value="X-ray"/>
    <property type="resolution" value="2.00 A"/>
    <property type="chains" value="A/B=69-369"/>
</dbReference>
<dbReference type="PDBsum" id="1D3Y"/>
<dbReference type="SMR" id="Q57815"/>
<dbReference type="FunCoup" id="Q57815">
    <property type="interactions" value="11"/>
</dbReference>
<dbReference type="STRING" id="243232.MJ_0369"/>
<dbReference type="PaxDb" id="243232-MJ_0369"/>
<dbReference type="EnsemblBacteria" id="AAB98358">
    <property type="protein sequence ID" value="AAB98358"/>
    <property type="gene ID" value="MJ_0369"/>
</dbReference>
<dbReference type="GeneID" id="1451226"/>
<dbReference type="KEGG" id="mja:MJ_0369"/>
<dbReference type="eggNOG" id="arCOG04143">
    <property type="taxonomic scope" value="Archaea"/>
</dbReference>
<dbReference type="HOGENOM" id="CLU_037229_1_0_2"/>
<dbReference type="InParanoid" id="Q57815"/>
<dbReference type="OrthoDB" id="5866at2157"/>
<dbReference type="PhylomeDB" id="Q57815"/>
<dbReference type="EvolutionaryTrace" id="Q57815"/>
<dbReference type="Proteomes" id="UP000000805">
    <property type="component" value="Chromosome"/>
</dbReference>
<dbReference type="GO" id="GO:0005694">
    <property type="term" value="C:chromosome"/>
    <property type="evidence" value="ECO:0007669"/>
    <property type="project" value="InterPro"/>
</dbReference>
<dbReference type="GO" id="GO:0005524">
    <property type="term" value="F:ATP binding"/>
    <property type="evidence" value="ECO:0007669"/>
    <property type="project" value="UniProtKB-KW"/>
</dbReference>
<dbReference type="GO" id="GO:0003677">
    <property type="term" value="F:DNA binding"/>
    <property type="evidence" value="ECO:0000318"/>
    <property type="project" value="GO_Central"/>
</dbReference>
<dbReference type="GO" id="GO:0003918">
    <property type="term" value="F:DNA topoisomerase type II (double strand cut, ATP-hydrolyzing) activity"/>
    <property type="evidence" value="ECO:0007669"/>
    <property type="project" value="UniProtKB-UniRule"/>
</dbReference>
<dbReference type="GO" id="GO:0000287">
    <property type="term" value="F:magnesium ion binding"/>
    <property type="evidence" value="ECO:0007669"/>
    <property type="project" value="UniProtKB-UniRule"/>
</dbReference>
<dbReference type="GO" id="GO:0006265">
    <property type="term" value="P:DNA topological change"/>
    <property type="evidence" value="ECO:0007669"/>
    <property type="project" value="UniProtKB-UniRule"/>
</dbReference>
<dbReference type="CDD" id="cd00223">
    <property type="entry name" value="TOPRIM_TopoIIB_SPO"/>
    <property type="match status" value="1"/>
</dbReference>
<dbReference type="Gene3D" id="3.40.1360.10">
    <property type="match status" value="1"/>
</dbReference>
<dbReference type="Gene3D" id="1.10.10.10">
    <property type="entry name" value="Winged helix-like DNA-binding domain superfamily/Winged helix DNA-binding domain"/>
    <property type="match status" value="1"/>
</dbReference>
<dbReference type="HAMAP" id="MF_00132">
    <property type="entry name" value="Top6A"/>
    <property type="match status" value="1"/>
</dbReference>
<dbReference type="InterPro" id="IPR002815">
    <property type="entry name" value="Spo11/TopoVI_A"/>
</dbReference>
<dbReference type="InterPro" id="IPR013049">
    <property type="entry name" value="Spo11/TopoVI_A_N"/>
</dbReference>
<dbReference type="InterPro" id="IPR036078">
    <property type="entry name" value="Spo11/TopoVI_A_sf"/>
</dbReference>
<dbReference type="InterPro" id="IPR049333">
    <property type="entry name" value="Topo_VI_alpha"/>
</dbReference>
<dbReference type="InterPro" id="IPR004085">
    <property type="entry name" value="TopoVI_A"/>
</dbReference>
<dbReference type="InterPro" id="IPR034136">
    <property type="entry name" value="TOPRIM_Topo6A/Spo11"/>
</dbReference>
<dbReference type="InterPro" id="IPR036388">
    <property type="entry name" value="WH-like_DNA-bd_sf"/>
</dbReference>
<dbReference type="NCBIfam" id="NF003337">
    <property type="entry name" value="PRK04342.1-6"/>
    <property type="match status" value="1"/>
</dbReference>
<dbReference type="PANTHER" id="PTHR10848">
    <property type="entry name" value="MEIOTIC RECOMBINATION PROTEIN SPO11"/>
    <property type="match status" value="1"/>
</dbReference>
<dbReference type="PANTHER" id="PTHR10848:SF0">
    <property type="entry name" value="MEIOTIC RECOMBINATION PROTEIN SPO11"/>
    <property type="match status" value="1"/>
</dbReference>
<dbReference type="Pfam" id="PF21180">
    <property type="entry name" value="TOP6A-Spo11_Toprim"/>
    <property type="match status" value="1"/>
</dbReference>
<dbReference type="Pfam" id="PF20768">
    <property type="entry name" value="Topo_VI_alpha"/>
    <property type="match status" value="1"/>
</dbReference>
<dbReference type="Pfam" id="PF04406">
    <property type="entry name" value="TP6A_N"/>
    <property type="match status" value="1"/>
</dbReference>
<dbReference type="PRINTS" id="PR01550">
    <property type="entry name" value="TOP6AFAMILY"/>
</dbReference>
<dbReference type="PRINTS" id="PR01552">
    <property type="entry name" value="TPISMRASE6A"/>
</dbReference>
<dbReference type="SUPFAM" id="SSF56726">
    <property type="entry name" value="DNA topoisomerase IV, alpha subunit"/>
    <property type="match status" value="1"/>
</dbReference>
<dbReference type="PROSITE" id="PS52041">
    <property type="entry name" value="TOPO_IIB"/>
    <property type="match status" value="1"/>
</dbReference>
<comment type="function">
    <text evidence="1 3">Relaxes both positive and negative superturns and exhibits a strong decatenase activity.</text>
</comment>
<comment type="catalytic activity">
    <reaction evidence="1 3">
        <text>ATP-dependent breakage, passage and rejoining of double-stranded DNA.</text>
        <dbReference type="EC" id="5.6.2.2"/>
    </reaction>
</comment>
<comment type="cofactor">
    <cofactor evidence="1 3">
        <name>Mg(2+)</name>
        <dbReference type="ChEBI" id="CHEBI:18420"/>
    </cofactor>
    <text evidence="3">Mg(2+) is directly coordinated by Glu-197 and Asp-249 as well as indirectly coordinated through 2 water molecules by Asp-251 (PubMed:10545127).</text>
</comment>
<comment type="subunit">
    <text evidence="1 3">Homodimer (PubMed:10545127). Heterotetramer of two Top6A and two Top6B chains.</text>
</comment>
<comment type="similarity">
    <text evidence="1">Belongs to the TOP6A family.</text>
</comment>
<gene>
    <name evidence="1" type="primary">top6A</name>
    <name type="ordered locus">MJ0369</name>
</gene>
<protein>
    <recommendedName>
        <fullName evidence="1">Type 2 DNA topoisomerase 6 subunit A</fullName>
        <ecNumber evidence="1 3">5.6.2.2</ecNumber>
    </recommendedName>
    <alternativeName>
        <fullName evidence="1">Type II DNA topoisomerase VI subunit A</fullName>
    </alternativeName>
</protein>
<feature type="chain" id="PRO_0000145449" description="Type 2 DNA topoisomerase 6 subunit A">
    <location>
        <begin position="1"/>
        <end position="369"/>
    </location>
</feature>
<feature type="domain" description="Topo IIA-type catalytic" evidence="2">
    <location>
        <begin position="10"/>
        <end position="146"/>
    </location>
</feature>
<feature type="active site" description="O-(5'-phospho-DNA)-tyrosine intermediate" evidence="2">
    <location>
        <position position="103"/>
    </location>
</feature>
<feature type="binding site" evidence="3">
    <location>
        <position position="197"/>
    </location>
    <ligand>
        <name>Mg(2+)</name>
        <dbReference type="ChEBI" id="CHEBI:18420"/>
    </ligand>
</feature>
<feature type="binding site" evidence="3">
    <location>
        <position position="249"/>
    </location>
    <ligand>
        <name>Mg(2+)</name>
        <dbReference type="ChEBI" id="CHEBI:18420"/>
    </ligand>
</feature>
<feature type="mutagenesis site" description="Reduces affinity for DNA." evidence="3">
    <original>E</original>
    <variation>A</variation>
    <location>
        <position position="197"/>
    </location>
</feature>
<feature type="helix" evidence="4">
    <location>
        <begin position="73"/>
        <end position="91"/>
    </location>
</feature>
<feature type="helix" evidence="4">
    <location>
        <begin position="98"/>
        <end position="104"/>
    </location>
</feature>
<feature type="helix" evidence="4">
    <location>
        <begin position="105"/>
        <end position="107"/>
    </location>
</feature>
<feature type="helix" evidence="4">
    <location>
        <begin position="109"/>
        <end position="111"/>
    </location>
</feature>
<feature type="helix" evidence="4">
    <location>
        <begin position="116"/>
        <end position="130"/>
    </location>
</feature>
<feature type="helix" evidence="4">
    <location>
        <begin position="134"/>
        <end position="137"/>
    </location>
</feature>
<feature type="strand" evidence="4">
    <location>
        <begin position="147"/>
        <end position="151"/>
    </location>
</feature>
<feature type="strand" evidence="4">
    <location>
        <begin position="153"/>
        <end position="158"/>
    </location>
</feature>
<feature type="strand" evidence="4">
    <location>
        <begin position="161"/>
        <end position="166"/>
    </location>
</feature>
<feature type="strand" evidence="4">
    <location>
        <begin position="173"/>
        <end position="176"/>
    </location>
</feature>
<feature type="strand" evidence="4">
    <location>
        <begin position="185"/>
        <end position="187"/>
    </location>
</feature>
<feature type="strand" evidence="4">
    <location>
        <begin position="191"/>
        <end position="197"/>
    </location>
</feature>
<feature type="helix" evidence="4">
    <location>
        <begin position="199"/>
        <end position="207"/>
    </location>
</feature>
<feature type="helix" evidence="4">
    <location>
        <begin position="210"/>
        <end position="213"/>
    </location>
</feature>
<feature type="strand" evidence="4">
    <location>
        <begin position="216"/>
        <end position="220"/>
    </location>
</feature>
<feature type="helix" evidence="4">
    <location>
        <begin position="227"/>
        <end position="240"/>
    </location>
</feature>
<feature type="strand" evidence="4">
    <location>
        <begin position="244"/>
        <end position="247"/>
    </location>
</feature>
<feature type="helix" evidence="4">
    <location>
        <begin position="252"/>
        <end position="256"/>
    </location>
</feature>
<feature type="helix" evidence="4">
    <location>
        <begin position="258"/>
        <end position="263"/>
    </location>
</feature>
<feature type="strand" evidence="4">
    <location>
        <begin position="282"/>
        <end position="286"/>
    </location>
</feature>
<feature type="helix" evidence="4">
    <location>
        <begin position="288"/>
        <end position="293"/>
    </location>
</feature>
<feature type="helix" evidence="4">
    <location>
        <begin position="303"/>
        <end position="315"/>
    </location>
</feature>
<feature type="helix" evidence="4">
    <location>
        <begin position="317"/>
        <end position="320"/>
    </location>
</feature>
<feature type="helix" evidence="4">
    <location>
        <begin position="323"/>
        <end position="335"/>
    </location>
</feature>
<feature type="strand" evidence="4">
    <location>
        <begin position="337"/>
        <end position="339"/>
    </location>
</feature>
<feature type="helix" evidence="4">
    <location>
        <begin position="341"/>
        <end position="347"/>
    </location>
</feature>
<feature type="helix" evidence="4">
    <location>
        <begin position="351"/>
        <end position="354"/>
    </location>
</feature>
<feature type="helix" evidence="4">
    <location>
        <begin position="356"/>
        <end position="362"/>
    </location>
</feature>
<feature type="helix" evidence="4">
    <location>
        <begin position="364"/>
        <end position="366"/>
    </location>
</feature>
<reference key="1">
    <citation type="journal article" date="1996" name="Science">
        <title>Complete genome sequence of the methanogenic archaeon, Methanococcus jannaschii.</title>
        <authorList>
            <person name="Bult C.J."/>
            <person name="White O."/>
            <person name="Olsen G.J."/>
            <person name="Zhou L."/>
            <person name="Fleischmann R.D."/>
            <person name="Sutton G.G."/>
            <person name="Blake J.A."/>
            <person name="FitzGerald L.M."/>
            <person name="Clayton R.A."/>
            <person name="Gocayne J.D."/>
            <person name="Kerlavage A.R."/>
            <person name="Dougherty B.A."/>
            <person name="Tomb J.-F."/>
            <person name="Adams M.D."/>
            <person name="Reich C.I."/>
            <person name="Overbeek R."/>
            <person name="Kirkness E.F."/>
            <person name="Weinstock K.G."/>
            <person name="Merrick J.M."/>
            <person name="Glodek A."/>
            <person name="Scott J.L."/>
            <person name="Geoghagen N.S.M."/>
            <person name="Weidman J.F."/>
            <person name="Fuhrmann J.L."/>
            <person name="Nguyen D."/>
            <person name="Utterback T.R."/>
            <person name="Kelley J.M."/>
            <person name="Peterson J.D."/>
            <person name="Sadow P.W."/>
            <person name="Hanna M.C."/>
            <person name="Cotton M.D."/>
            <person name="Roberts K.M."/>
            <person name="Hurst M.A."/>
            <person name="Kaine B.P."/>
            <person name="Borodovsky M."/>
            <person name="Klenk H.-P."/>
            <person name="Fraser C.M."/>
            <person name="Smith H.O."/>
            <person name="Woese C.R."/>
            <person name="Venter J.C."/>
        </authorList>
    </citation>
    <scope>NUCLEOTIDE SEQUENCE [LARGE SCALE GENOMIC DNA]</scope>
    <source>
        <strain>ATCC 43067 / DSM 2661 / JAL-1 / JCM 10045 / NBRC 100440</strain>
    </source>
</reference>
<reference key="2">
    <citation type="journal article" date="1999" name="EMBO J.">
        <title>Structure and function of an archaeal topoisomerase VI subunit with homology to the meiotic recombination factor Spo11.</title>
        <authorList>
            <person name="Nichols M.D."/>
            <person name="DeAngelis K."/>
            <person name="Keck J.L."/>
            <person name="Berger J.M."/>
        </authorList>
    </citation>
    <scope>PROTEIN SEQUENCE OF 1-69</scope>
    <scope>X-RAY CRYSTALLOGRAPHY (2.0 ANGSTROMS) OF 69-369 IN COMPLEX WITH MAGNESIUM IONS</scope>
    <scope>FUNCTION</scope>
    <scope>CATALYTIC ACTIVITY</scope>
    <scope>COFACTOR</scope>
    <scope>SUBUNIT</scope>
    <scope>MUTAGENESIS OF GLU-197</scope>
</reference>
<proteinExistence type="evidence at protein level"/>
<sequence>MVKLPAISKKPREIAKQKIIELAKKMYEDLMKGKRPKITMPIRSLSNAMFDKEKGSFTLVGKEKARTLTVNQAKIFAQTTKMLEFAKQLLETDDFSTLREAYYVSKNWGEARFDDQQASNNVIEDLEAALGVLREHLGFIPEEDGSSVVGPLKIIEETPEGELVVDCTKLGTGAYNIPNDVTKLNLETDADFILAIETSGMFARLNAERFWDKHNCILVSLKGVPARATRRFIKRLHEEHDLPVLVFTDGDPYGYLNIYRTLKVGSGKAIHLADKLSIPAARLIGVTPQDIIDYDLPTHPLKEQDIKRIKDGLKNDDFVRSFPEWQKALKQMLDMGVRAEQQSLAKYGLKYVVNTYLPEKIKDESTWLP</sequence>